<proteinExistence type="inferred from homology"/>
<evidence type="ECO:0000255" key="1">
    <source>
        <dbReference type="HAMAP-Rule" id="MF_00340"/>
    </source>
</evidence>
<evidence type="ECO:0000256" key="2">
    <source>
        <dbReference type="SAM" id="MobiDB-lite"/>
    </source>
</evidence>
<evidence type="ECO:0000305" key="3"/>
<geneLocation type="chloroplast"/>
<comment type="subcellular location">
    <subcellularLocation>
        <location>Plastid</location>
        <location>Chloroplast</location>
    </subcellularLocation>
</comment>
<comment type="similarity">
    <text evidence="1">Belongs to the bacterial ribosomal protein bL32 family.</text>
</comment>
<keyword id="KW-0150">Chloroplast</keyword>
<keyword id="KW-0934">Plastid</keyword>
<keyword id="KW-0687">Ribonucleoprotein</keyword>
<keyword id="KW-0689">Ribosomal protein</keyword>
<feature type="chain" id="PRO_0000296610" description="Large ribosomal subunit protein bL32c">
    <location>
        <begin position="1"/>
        <end position="54"/>
    </location>
</feature>
<feature type="region of interest" description="Disordered" evidence="2">
    <location>
        <begin position="1"/>
        <end position="54"/>
    </location>
</feature>
<feature type="compositionally biased region" description="Basic residues" evidence="2">
    <location>
        <begin position="1"/>
        <end position="20"/>
    </location>
</feature>
<feature type="compositionally biased region" description="Low complexity" evidence="2">
    <location>
        <begin position="31"/>
        <end position="42"/>
    </location>
</feature>
<name>RK32_CHLAT</name>
<dbReference type="EMBL" id="DQ422812">
    <property type="protein sequence ID" value="ABM87963.1"/>
    <property type="molecule type" value="Genomic_DNA"/>
</dbReference>
<dbReference type="RefSeq" id="YP_001019169.1">
    <property type="nucleotide sequence ID" value="NC_008822.1"/>
</dbReference>
<dbReference type="SMR" id="A2CI70"/>
<dbReference type="GeneID" id="4783267"/>
<dbReference type="GO" id="GO:0009507">
    <property type="term" value="C:chloroplast"/>
    <property type="evidence" value="ECO:0007669"/>
    <property type="project" value="UniProtKB-SubCell"/>
</dbReference>
<dbReference type="GO" id="GO:0015934">
    <property type="term" value="C:large ribosomal subunit"/>
    <property type="evidence" value="ECO:0007669"/>
    <property type="project" value="InterPro"/>
</dbReference>
<dbReference type="GO" id="GO:0003735">
    <property type="term" value="F:structural constituent of ribosome"/>
    <property type="evidence" value="ECO:0007669"/>
    <property type="project" value="InterPro"/>
</dbReference>
<dbReference type="GO" id="GO:0006412">
    <property type="term" value="P:translation"/>
    <property type="evidence" value="ECO:0007669"/>
    <property type="project" value="UniProtKB-UniRule"/>
</dbReference>
<dbReference type="HAMAP" id="MF_00340">
    <property type="entry name" value="Ribosomal_bL32"/>
    <property type="match status" value="1"/>
</dbReference>
<dbReference type="InterPro" id="IPR002677">
    <property type="entry name" value="Ribosomal_bL32"/>
</dbReference>
<dbReference type="InterPro" id="IPR044958">
    <property type="entry name" value="Ribosomal_bL32_plant/cyanobact"/>
</dbReference>
<dbReference type="InterPro" id="IPR011332">
    <property type="entry name" value="Ribosomal_zn-bd"/>
</dbReference>
<dbReference type="NCBIfam" id="TIGR01031">
    <property type="entry name" value="rpmF_bact"/>
    <property type="match status" value="1"/>
</dbReference>
<dbReference type="PANTHER" id="PTHR36083">
    <property type="entry name" value="50S RIBOSOMAL PROTEIN L32, CHLOROPLASTIC"/>
    <property type="match status" value="1"/>
</dbReference>
<dbReference type="PANTHER" id="PTHR36083:SF1">
    <property type="entry name" value="LARGE RIBOSOMAL SUBUNIT PROTEIN BL32C"/>
    <property type="match status" value="1"/>
</dbReference>
<dbReference type="Pfam" id="PF01783">
    <property type="entry name" value="Ribosomal_L32p"/>
    <property type="match status" value="1"/>
</dbReference>
<dbReference type="SUPFAM" id="SSF57829">
    <property type="entry name" value="Zn-binding ribosomal proteins"/>
    <property type="match status" value="1"/>
</dbReference>
<sequence length="54" mass="5983">MAVPKKRVSKSKRDMRKTTWKNKASKEAKKALSLAKSVSTGKSKSKGFQIKSSN</sequence>
<gene>
    <name evidence="1" type="primary">rpl32</name>
</gene>
<organism>
    <name type="scientific">Chlorokybus atmophyticus</name>
    <name type="common">Soil alga</name>
    <dbReference type="NCBI Taxonomy" id="3144"/>
    <lineage>
        <taxon>Eukaryota</taxon>
        <taxon>Viridiplantae</taxon>
        <taxon>Streptophyta</taxon>
        <taxon>Chlorokybophyceae</taxon>
        <taxon>Chlorokybales</taxon>
        <taxon>Chlorokybaceae</taxon>
        <taxon>Chlorokybus</taxon>
    </lineage>
</organism>
<reference key="1">
    <citation type="journal article" date="2007" name="BMC Biol.">
        <title>A clade uniting the green algae Mesostigma viride and Chlorokybus atmophyticus represents the deepest branch of the Streptophyta in chloroplast genome-based phylogenies.</title>
        <authorList>
            <person name="Lemieux C."/>
            <person name="Otis C."/>
            <person name="Turmel M."/>
        </authorList>
    </citation>
    <scope>NUCLEOTIDE SEQUENCE [LARGE SCALE GENOMIC DNA]</scope>
    <source>
        <strain>SAG 48.80</strain>
    </source>
</reference>
<accession>A2CI70</accession>
<protein>
    <recommendedName>
        <fullName evidence="1">Large ribosomal subunit protein bL32c</fullName>
    </recommendedName>
    <alternativeName>
        <fullName evidence="3">50S ribosomal protein L32, chloroplastic</fullName>
    </alternativeName>
</protein>